<gene>
    <name type="primary">CCT6B</name>
</gene>
<keyword id="KW-0067">ATP-binding</keyword>
<keyword id="KW-0143">Chaperone</keyword>
<keyword id="KW-0963">Cytoplasm</keyword>
<keyword id="KW-0547">Nucleotide-binding</keyword>
<keyword id="KW-1185">Reference proteome</keyword>
<reference key="1">
    <citation type="submission" date="2005-08" db="EMBL/GenBank/DDBJ databases">
        <authorList>
            <consortium name="NIH - Mammalian Gene Collection (MGC) project"/>
        </authorList>
    </citation>
    <scope>NUCLEOTIDE SEQUENCE [LARGE SCALE MRNA]</scope>
    <source>
        <strain>Crossbred X Angus</strain>
        <tissue>Liver</tissue>
    </source>
</reference>
<proteinExistence type="evidence at transcript level"/>
<protein>
    <recommendedName>
        <fullName>T-complex protein 1 subunit zeta-2</fullName>
        <shortName>TCP-1-zeta-2</shortName>
    </recommendedName>
    <alternativeName>
        <fullName>CCT-zeta-2</fullName>
    </alternativeName>
</protein>
<accession>Q3T084</accession>
<evidence type="ECO:0000250" key="1">
    <source>
        <dbReference type="UniProtKB" id="Q92526"/>
    </source>
</evidence>
<evidence type="ECO:0000305" key="2"/>
<sequence length="531" mass="58031">MAAIKAINSKAEVARAQAALAVNICAARGLQDVLRTNLGPKGTMKMLVSGAGDVKLTKDGNVLLHEMQIQHPTASLIAKVATAQDDITGDGTTSNVLIIGELLKQADLYISEGLHPRIIAEGFEIAKIKALEVLEQVKIKKEMKREIHLDVARTSLQTKVHPQLADVLTEAVVDSVLAIRRPNYPIDLFMVEIMEMKHKSETDTKLIKGLVLDHGARHPDMKKRVDDAFILTCNVSLEYEKTEVSSGFFYKTAEEKEKLVKAERKFIEDRVQKIIDLKDKVCAQSNKGFVVINQKGIDPFSLDALAKHGILALRRAKRRNMERLSLACGGVAVNSVEDLSVDCLGHAGLVYEYTLGEEKYTFIEDCINPRSVTLLVKGPNKHTLTQIKDAVRDGLRAIKNAIEDGCVVPGAGAVEVVIAEALVTYKHTIQGRARLGVQAFADALLIIPKVLAQNSGYDLQETLVKVQAEHSNSKQPVGIDLNTGEPMVAADAGVWDNYCVKKQLLHSCTVIATNILLVDEIMRAGMSSLKG</sequence>
<feature type="chain" id="PRO_0000236263" description="T-complex protein 1 subunit zeta-2">
    <location>
        <begin position="1"/>
        <end position="531"/>
    </location>
</feature>
<name>TCPW_BOVIN</name>
<dbReference type="EMBL" id="BC102527">
    <property type="protein sequence ID" value="AAI02528.1"/>
    <property type="molecule type" value="mRNA"/>
</dbReference>
<dbReference type="RefSeq" id="NP_001029814.1">
    <property type="nucleotide sequence ID" value="NM_001034642.2"/>
</dbReference>
<dbReference type="SMR" id="Q3T084"/>
<dbReference type="CORUM" id="Q3T084"/>
<dbReference type="FunCoup" id="Q3T084">
    <property type="interactions" value="2245"/>
</dbReference>
<dbReference type="STRING" id="9913.ENSBTAP00000027104"/>
<dbReference type="PaxDb" id="9913-ENSBTAP00000027104"/>
<dbReference type="PeptideAtlas" id="Q3T084"/>
<dbReference type="GeneID" id="538090"/>
<dbReference type="KEGG" id="bta:538090"/>
<dbReference type="CTD" id="10693"/>
<dbReference type="eggNOG" id="KOG0359">
    <property type="taxonomic scope" value="Eukaryota"/>
</dbReference>
<dbReference type="InParanoid" id="Q3T084"/>
<dbReference type="OrthoDB" id="10052040at2759"/>
<dbReference type="Proteomes" id="UP000009136">
    <property type="component" value="Unplaced"/>
</dbReference>
<dbReference type="GO" id="GO:0005832">
    <property type="term" value="C:chaperonin-containing T-complex"/>
    <property type="evidence" value="ECO:0000318"/>
    <property type="project" value="GO_Central"/>
</dbReference>
<dbReference type="GO" id="GO:0005524">
    <property type="term" value="F:ATP binding"/>
    <property type="evidence" value="ECO:0007669"/>
    <property type="project" value="UniProtKB-KW"/>
</dbReference>
<dbReference type="GO" id="GO:0016887">
    <property type="term" value="F:ATP hydrolysis activity"/>
    <property type="evidence" value="ECO:0007669"/>
    <property type="project" value="InterPro"/>
</dbReference>
<dbReference type="GO" id="GO:0140662">
    <property type="term" value="F:ATP-dependent protein folding chaperone"/>
    <property type="evidence" value="ECO:0007669"/>
    <property type="project" value="InterPro"/>
</dbReference>
<dbReference type="GO" id="GO:0051082">
    <property type="term" value="F:unfolded protein binding"/>
    <property type="evidence" value="ECO:0000318"/>
    <property type="project" value="GO_Central"/>
</dbReference>
<dbReference type="GO" id="GO:0006457">
    <property type="term" value="P:protein folding"/>
    <property type="evidence" value="ECO:0000318"/>
    <property type="project" value="GO_Central"/>
</dbReference>
<dbReference type="CDD" id="cd03342">
    <property type="entry name" value="TCP1_zeta"/>
    <property type="match status" value="1"/>
</dbReference>
<dbReference type="FunFam" id="1.10.560.10:FF:000038">
    <property type="entry name" value="Chaperonin containing TCP1 subunit 6B"/>
    <property type="match status" value="1"/>
</dbReference>
<dbReference type="FunFam" id="3.30.260.10:FF:000029">
    <property type="entry name" value="Chaperonin containing TCP1 subunit 6B"/>
    <property type="match status" value="1"/>
</dbReference>
<dbReference type="FunFam" id="1.10.560.10:FF:000022">
    <property type="entry name" value="T-complex protein 1 subunit zeta"/>
    <property type="match status" value="1"/>
</dbReference>
<dbReference type="FunFam" id="3.30.260.10:FF:000017">
    <property type="entry name" value="T-complex protein 1 subunit zeta"/>
    <property type="match status" value="1"/>
</dbReference>
<dbReference type="FunFam" id="3.50.7.10:FF:000004">
    <property type="entry name" value="T-complex protein 1 subunit zeta"/>
    <property type="match status" value="1"/>
</dbReference>
<dbReference type="Gene3D" id="3.50.7.10">
    <property type="entry name" value="GroEL"/>
    <property type="match status" value="1"/>
</dbReference>
<dbReference type="Gene3D" id="1.10.560.10">
    <property type="entry name" value="GroEL-like equatorial domain"/>
    <property type="match status" value="1"/>
</dbReference>
<dbReference type="Gene3D" id="3.30.260.10">
    <property type="entry name" value="TCP-1-like chaperonin intermediate domain"/>
    <property type="match status" value="1"/>
</dbReference>
<dbReference type="InterPro" id="IPR012722">
    <property type="entry name" value="Chap_CCT_zeta"/>
</dbReference>
<dbReference type="InterPro" id="IPR017998">
    <property type="entry name" value="Chaperone_TCP-1"/>
</dbReference>
<dbReference type="InterPro" id="IPR002194">
    <property type="entry name" value="Chaperonin_TCP-1_CS"/>
</dbReference>
<dbReference type="InterPro" id="IPR002423">
    <property type="entry name" value="Cpn60/GroEL/TCP-1"/>
</dbReference>
<dbReference type="InterPro" id="IPR027409">
    <property type="entry name" value="GroEL-like_apical_dom_sf"/>
</dbReference>
<dbReference type="InterPro" id="IPR027413">
    <property type="entry name" value="GROEL-like_equatorial_sf"/>
</dbReference>
<dbReference type="InterPro" id="IPR027410">
    <property type="entry name" value="TCP-1-like_intermed_sf"/>
</dbReference>
<dbReference type="InterPro" id="IPR053374">
    <property type="entry name" value="TCP-1_chaperonin"/>
</dbReference>
<dbReference type="NCBIfam" id="TIGR02347">
    <property type="entry name" value="chap_CCT_zeta"/>
    <property type="match status" value="1"/>
</dbReference>
<dbReference type="NCBIfam" id="NF041083">
    <property type="entry name" value="thermosome_beta"/>
    <property type="match status" value="1"/>
</dbReference>
<dbReference type="PANTHER" id="PTHR11353">
    <property type="entry name" value="CHAPERONIN"/>
    <property type="match status" value="1"/>
</dbReference>
<dbReference type="Pfam" id="PF00118">
    <property type="entry name" value="Cpn60_TCP1"/>
    <property type="match status" value="1"/>
</dbReference>
<dbReference type="PRINTS" id="PR00304">
    <property type="entry name" value="TCOMPLEXTCP1"/>
</dbReference>
<dbReference type="SUPFAM" id="SSF52029">
    <property type="entry name" value="GroEL apical domain-like"/>
    <property type="match status" value="1"/>
</dbReference>
<dbReference type="SUPFAM" id="SSF48592">
    <property type="entry name" value="GroEL equatorial domain-like"/>
    <property type="match status" value="1"/>
</dbReference>
<dbReference type="SUPFAM" id="SSF54849">
    <property type="entry name" value="GroEL-intermediate domain like"/>
    <property type="match status" value="1"/>
</dbReference>
<dbReference type="PROSITE" id="PS00750">
    <property type="entry name" value="TCP1_1"/>
    <property type="match status" value="1"/>
</dbReference>
<dbReference type="PROSITE" id="PS00751">
    <property type="entry name" value="TCP1_2"/>
    <property type="match status" value="1"/>
</dbReference>
<dbReference type="PROSITE" id="PS00995">
    <property type="entry name" value="TCP1_3"/>
    <property type="match status" value="1"/>
</dbReference>
<organism>
    <name type="scientific">Bos taurus</name>
    <name type="common">Bovine</name>
    <dbReference type="NCBI Taxonomy" id="9913"/>
    <lineage>
        <taxon>Eukaryota</taxon>
        <taxon>Metazoa</taxon>
        <taxon>Chordata</taxon>
        <taxon>Craniata</taxon>
        <taxon>Vertebrata</taxon>
        <taxon>Euteleostomi</taxon>
        <taxon>Mammalia</taxon>
        <taxon>Eutheria</taxon>
        <taxon>Laurasiatheria</taxon>
        <taxon>Artiodactyla</taxon>
        <taxon>Ruminantia</taxon>
        <taxon>Pecora</taxon>
        <taxon>Bovidae</taxon>
        <taxon>Bovinae</taxon>
        <taxon>Bos</taxon>
    </lineage>
</organism>
<comment type="function">
    <text evidence="1">Component of the chaperonin-containing T-complex (TRiC), a molecular chaperone complex that assists the folding of proteins upon ATP hydrolysis.</text>
</comment>
<comment type="subunit">
    <text evidence="1">Component of the chaperonin-containing T-complex (TRiC), a heterooligomeric complex of about 850 to 900 kDa that forms two stacked rings, 12 to 16 nm in diameter.</text>
</comment>
<comment type="subcellular location">
    <subcellularLocation>
        <location evidence="1">Cytoplasm</location>
    </subcellularLocation>
</comment>
<comment type="similarity">
    <text evidence="2">Belongs to the TCP-1 chaperonin family.</text>
</comment>